<name>LAMB_ECO45</name>
<accession>B7MJ27</accession>
<organism>
    <name type="scientific">Escherichia coli O45:K1 (strain S88 / ExPEC)</name>
    <dbReference type="NCBI Taxonomy" id="585035"/>
    <lineage>
        <taxon>Bacteria</taxon>
        <taxon>Pseudomonadati</taxon>
        <taxon>Pseudomonadota</taxon>
        <taxon>Gammaproteobacteria</taxon>
        <taxon>Enterobacterales</taxon>
        <taxon>Enterobacteriaceae</taxon>
        <taxon>Escherichia</taxon>
    </lineage>
</organism>
<comment type="function">
    <text evidence="1">Involved in the transport of maltose and maltodextrins.</text>
</comment>
<comment type="catalytic activity">
    <reaction evidence="1">
        <text>beta-maltose(in) = beta-maltose(out)</text>
        <dbReference type="Rhea" id="RHEA:29731"/>
        <dbReference type="ChEBI" id="CHEBI:18147"/>
    </reaction>
</comment>
<comment type="subunit">
    <text evidence="1">Homotrimer formed of three 18-stranded antiparallel beta-barrels, containing three independent channels.</text>
</comment>
<comment type="subcellular location">
    <subcellularLocation>
        <location evidence="1">Cell outer membrane</location>
        <topology evidence="1">Multi-pass membrane protein</topology>
    </subcellularLocation>
</comment>
<comment type="induction">
    <text evidence="1">By maltose.</text>
</comment>
<comment type="similarity">
    <text evidence="1">Belongs to the porin LamB (TC 1.B.3) family.</text>
</comment>
<keyword id="KW-0998">Cell outer membrane</keyword>
<keyword id="KW-0406">Ion transport</keyword>
<keyword id="KW-0472">Membrane</keyword>
<keyword id="KW-0626">Porin</keyword>
<keyword id="KW-1185">Reference proteome</keyword>
<keyword id="KW-0732">Signal</keyword>
<keyword id="KW-0762">Sugar transport</keyword>
<keyword id="KW-0812">Transmembrane</keyword>
<keyword id="KW-1134">Transmembrane beta strand</keyword>
<keyword id="KW-0813">Transport</keyword>
<evidence type="ECO:0000255" key="1">
    <source>
        <dbReference type="HAMAP-Rule" id="MF_01301"/>
    </source>
</evidence>
<dbReference type="EMBL" id="CU928161">
    <property type="protein sequence ID" value="CAR05671.1"/>
    <property type="molecule type" value="Genomic_DNA"/>
</dbReference>
<dbReference type="RefSeq" id="WP_000973666.1">
    <property type="nucleotide sequence ID" value="NC_011742.1"/>
</dbReference>
<dbReference type="SMR" id="B7MJ27"/>
<dbReference type="KEGG" id="ecz:ECS88_4510"/>
<dbReference type="HOGENOM" id="CLU_032473_4_1_6"/>
<dbReference type="Proteomes" id="UP000000747">
    <property type="component" value="Chromosome"/>
</dbReference>
<dbReference type="GO" id="GO:0009279">
    <property type="term" value="C:cell outer membrane"/>
    <property type="evidence" value="ECO:0007669"/>
    <property type="project" value="UniProtKB-SubCell"/>
</dbReference>
<dbReference type="GO" id="GO:0046930">
    <property type="term" value="C:pore complex"/>
    <property type="evidence" value="ECO:0007669"/>
    <property type="project" value="UniProtKB-KW"/>
</dbReference>
<dbReference type="GO" id="GO:0042958">
    <property type="term" value="F:maltodextrin transmembrane transporter activity"/>
    <property type="evidence" value="ECO:0007669"/>
    <property type="project" value="InterPro"/>
</dbReference>
<dbReference type="GO" id="GO:0015481">
    <property type="term" value="F:maltose transporting porin activity"/>
    <property type="evidence" value="ECO:0007669"/>
    <property type="project" value="InterPro"/>
</dbReference>
<dbReference type="GO" id="GO:0006811">
    <property type="term" value="P:monoatomic ion transport"/>
    <property type="evidence" value="ECO:0007669"/>
    <property type="project" value="UniProtKB-KW"/>
</dbReference>
<dbReference type="CDD" id="cd01346">
    <property type="entry name" value="Maltoporin-like"/>
    <property type="match status" value="1"/>
</dbReference>
<dbReference type="FunFam" id="2.40.170.10:FF:000001">
    <property type="entry name" value="Maltoporin"/>
    <property type="match status" value="1"/>
</dbReference>
<dbReference type="Gene3D" id="2.40.170.10">
    <property type="entry name" value="Porin, LamB type"/>
    <property type="match status" value="1"/>
</dbReference>
<dbReference type="HAMAP" id="MF_01301">
    <property type="entry name" value="LamB"/>
    <property type="match status" value="1"/>
</dbReference>
<dbReference type="InterPro" id="IPR050286">
    <property type="entry name" value="G_neg_Bact_CarbUptk_Porin"/>
</dbReference>
<dbReference type="InterPro" id="IPR023738">
    <property type="entry name" value="Maltoporin"/>
</dbReference>
<dbReference type="InterPro" id="IPR003192">
    <property type="entry name" value="Porin_LamB"/>
</dbReference>
<dbReference type="InterPro" id="IPR036998">
    <property type="entry name" value="Porin_LamB_sf"/>
</dbReference>
<dbReference type="NCBIfam" id="NF006860">
    <property type="entry name" value="PRK09360.1"/>
    <property type="match status" value="1"/>
</dbReference>
<dbReference type="PANTHER" id="PTHR38762">
    <property type="entry name" value="CRYPTIC OUTER MEMBRANE PORIN BGLH-RELATED"/>
    <property type="match status" value="1"/>
</dbReference>
<dbReference type="PANTHER" id="PTHR38762:SF1">
    <property type="entry name" value="CRYPTIC OUTER MEMBRANE PORIN BGLH-RELATED"/>
    <property type="match status" value="1"/>
</dbReference>
<dbReference type="Pfam" id="PF02264">
    <property type="entry name" value="LamB"/>
    <property type="match status" value="1"/>
</dbReference>
<dbReference type="SUPFAM" id="SSF56935">
    <property type="entry name" value="Porins"/>
    <property type="match status" value="1"/>
</dbReference>
<protein>
    <recommendedName>
        <fullName evidence="1">Maltoporin</fullName>
    </recommendedName>
    <alternativeName>
        <fullName evidence="1">Maltose-inducible porin</fullName>
    </alternativeName>
</protein>
<feature type="signal peptide" evidence="1">
    <location>
        <begin position="1"/>
        <end position="25"/>
    </location>
</feature>
<feature type="chain" id="PRO_1000140480" description="Maltoporin">
    <location>
        <begin position="26"/>
        <end position="446"/>
    </location>
</feature>
<feature type="site" description="Greasy slide, important in sugar transport" evidence="1">
    <location>
        <position position="31"/>
    </location>
</feature>
<feature type="site" description="Greasy slide, important in sugar transport" evidence="1">
    <location>
        <position position="66"/>
    </location>
</feature>
<feature type="site" description="Greasy slide, important in sugar transport" evidence="1">
    <location>
        <position position="99"/>
    </location>
</feature>
<feature type="site" description="Important in sugar transport" evidence="1">
    <location>
        <position position="143"/>
    </location>
</feature>
<feature type="site" description="Greasy slide, important in sugar transport" evidence="1">
    <location>
        <position position="252"/>
    </location>
</feature>
<feature type="site" description="Greasy slide, important in sugar transport" evidence="1">
    <location>
        <position position="383"/>
    </location>
</feature>
<feature type="site" description="Greasy slide, important in sugar transport" evidence="1">
    <location>
        <position position="445"/>
    </location>
</feature>
<gene>
    <name evidence="1" type="primary">lamB</name>
    <name type="ordered locus">ECS88_4510</name>
</gene>
<reference key="1">
    <citation type="journal article" date="2009" name="PLoS Genet.">
        <title>Organised genome dynamics in the Escherichia coli species results in highly diverse adaptive paths.</title>
        <authorList>
            <person name="Touchon M."/>
            <person name="Hoede C."/>
            <person name="Tenaillon O."/>
            <person name="Barbe V."/>
            <person name="Baeriswyl S."/>
            <person name="Bidet P."/>
            <person name="Bingen E."/>
            <person name="Bonacorsi S."/>
            <person name="Bouchier C."/>
            <person name="Bouvet O."/>
            <person name="Calteau A."/>
            <person name="Chiapello H."/>
            <person name="Clermont O."/>
            <person name="Cruveiller S."/>
            <person name="Danchin A."/>
            <person name="Diard M."/>
            <person name="Dossat C."/>
            <person name="Karoui M.E."/>
            <person name="Frapy E."/>
            <person name="Garry L."/>
            <person name="Ghigo J.M."/>
            <person name="Gilles A.M."/>
            <person name="Johnson J."/>
            <person name="Le Bouguenec C."/>
            <person name="Lescat M."/>
            <person name="Mangenot S."/>
            <person name="Martinez-Jehanne V."/>
            <person name="Matic I."/>
            <person name="Nassif X."/>
            <person name="Oztas S."/>
            <person name="Petit M.A."/>
            <person name="Pichon C."/>
            <person name="Rouy Z."/>
            <person name="Ruf C.S."/>
            <person name="Schneider D."/>
            <person name="Tourret J."/>
            <person name="Vacherie B."/>
            <person name="Vallenet D."/>
            <person name="Medigue C."/>
            <person name="Rocha E.P.C."/>
            <person name="Denamur E."/>
        </authorList>
    </citation>
    <scope>NUCLEOTIDE SEQUENCE [LARGE SCALE GENOMIC DNA]</scope>
    <source>
        <strain>S88 / ExPEC</strain>
    </source>
</reference>
<proteinExistence type="inferred from homology"/>
<sequence length="446" mass="49941">MMITLRKLPLAVAVAAGVMSAQAMAVDFHGYARSGIGWTGSGGEQQCFQTTGAQSKYRLGNECETYAELKLGQEVWKEGDKSFYFDTNVAYSVAQQNDWEATDPAFREANVQGKNLIEWLPGSTIWAGKRFYQRHDVHMIDFYYWDISGPGAGLENIDVGFGKLSLAATRSSEAGGSSSFASNNIYDYTNETANDVFDVRLAQMEINPGGTLELGVDYGRANLRDNYRLVDGASKDGWLFTAEHTQSVLKGFNKFVVQYATDSMTSQGKGLSQGSGVAFDNEKFAYNINNNGHMLRILDHGAISMGDNWDMMYVGMYQDINWDNDNGTKWWTVGIRPMYKWTPIMSTVMEIGYDNVESQRTGDKNNQYKITLAQQWQAGDSIWSRPAIRVFATYAKWDEKWGYDYTGSSSTNPYYGKAVSADFNGGSFGRGDSDEWTFGAQMEIWW</sequence>